<proteinExistence type="inferred from homology"/>
<gene>
    <name evidence="2" type="primary">Adk2</name>
    <name type="ORF">GJ20444</name>
</gene>
<accession>B4LP08</accession>
<sequence>MAPNVSIPVERYEPSNLGVNAILLGPPGSGKGTQAPLLQKKFCVCHLSTGDMLRAEISSGSKLGAELKKVMDEGKLVSDDLVVDMIDSNLDKPECKNGFLLDGFPRTVVQAQKLDTLLDKRRTSLDAVIEFAIDDNLLVRRITGRLIHQASGRSYHEEFAPPKVQMKDDITGEPLIKRSDDNVDALKKRLEAYHKQTKPLVDYYGLRGLHFKVDAAKKASDVFSSIDSIFQRKCYSKIQH</sequence>
<keyword id="KW-0067">ATP-binding</keyword>
<keyword id="KW-0963">Cytoplasm</keyword>
<keyword id="KW-0418">Kinase</keyword>
<keyword id="KW-0496">Mitochondrion</keyword>
<keyword id="KW-0547">Nucleotide-binding</keyword>
<keyword id="KW-0597">Phosphoprotein</keyword>
<keyword id="KW-1185">Reference proteome</keyword>
<keyword id="KW-0808">Transferase</keyword>
<name>KAD2_DROVI</name>
<evidence type="ECO:0000250" key="1"/>
<evidence type="ECO:0000255" key="2">
    <source>
        <dbReference type="HAMAP-Rule" id="MF_03168"/>
    </source>
</evidence>
<feature type="chain" id="PRO_0000365711" description="Adenylate kinase">
    <location>
        <begin position="1"/>
        <end position="240"/>
    </location>
</feature>
<feature type="region of interest" description="NMP" evidence="2">
    <location>
        <begin position="48"/>
        <end position="77"/>
    </location>
</feature>
<feature type="region of interest" description="LID" evidence="2">
    <location>
        <begin position="144"/>
        <end position="181"/>
    </location>
</feature>
<feature type="binding site" evidence="2">
    <location>
        <begin position="28"/>
        <end position="33"/>
    </location>
    <ligand>
        <name>ATP</name>
        <dbReference type="ChEBI" id="CHEBI:30616"/>
    </ligand>
</feature>
<feature type="binding site" evidence="2">
    <location>
        <position position="49"/>
    </location>
    <ligand>
        <name>AMP</name>
        <dbReference type="ChEBI" id="CHEBI:456215"/>
    </ligand>
</feature>
<feature type="binding site" evidence="2">
    <location>
        <position position="54"/>
    </location>
    <ligand>
        <name>AMP</name>
        <dbReference type="ChEBI" id="CHEBI:456215"/>
    </ligand>
</feature>
<feature type="binding site" evidence="2">
    <location>
        <begin position="75"/>
        <end position="77"/>
    </location>
    <ligand>
        <name>AMP</name>
        <dbReference type="ChEBI" id="CHEBI:456215"/>
    </ligand>
</feature>
<feature type="binding site" evidence="2">
    <location>
        <begin position="103"/>
        <end position="106"/>
    </location>
    <ligand>
        <name>AMP</name>
        <dbReference type="ChEBI" id="CHEBI:456215"/>
    </ligand>
</feature>
<feature type="binding site" evidence="2">
    <location>
        <position position="110"/>
    </location>
    <ligand>
        <name>AMP</name>
        <dbReference type="ChEBI" id="CHEBI:456215"/>
    </ligand>
</feature>
<feature type="binding site" evidence="2">
    <location>
        <position position="145"/>
    </location>
    <ligand>
        <name>ATP</name>
        <dbReference type="ChEBI" id="CHEBI:30616"/>
    </ligand>
</feature>
<feature type="binding site" evidence="2">
    <location>
        <begin position="154"/>
        <end position="155"/>
    </location>
    <ligand>
        <name>ATP</name>
        <dbReference type="ChEBI" id="CHEBI:30616"/>
    </ligand>
</feature>
<feature type="binding site" evidence="2">
    <location>
        <position position="178"/>
    </location>
    <ligand>
        <name>AMP</name>
        <dbReference type="ChEBI" id="CHEBI:456215"/>
    </ligand>
</feature>
<feature type="binding site" evidence="2">
    <location>
        <position position="189"/>
    </location>
    <ligand>
        <name>AMP</name>
        <dbReference type="ChEBI" id="CHEBI:456215"/>
    </ligand>
</feature>
<feature type="binding site" evidence="2">
    <location>
        <position position="217"/>
    </location>
    <ligand>
        <name>ATP</name>
        <dbReference type="ChEBI" id="CHEBI:30616"/>
    </ligand>
</feature>
<feature type="modified residue" description="Phosphoserine" evidence="1">
    <location>
        <position position="48"/>
    </location>
</feature>
<dbReference type="EC" id="2.7.4.3" evidence="2"/>
<dbReference type="EMBL" id="CH940648">
    <property type="protein sequence ID" value="EDW61177.1"/>
    <property type="molecule type" value="Genomic_DNA"/>
</dbReference>
<dbReference type="SMR" id="B4LP08"/>
<dbReference type="FunCoup" id="B4LP08">
    <property type="interactions" value="1609"/>
</dbReference>
<dbReference type="STRING" id="7244.B4LP08"/>
<dbReference type="EnsemblMetazoa" id="FBtr0236369">
    <property type="protein sequence ID" value="FBpp0234861"/>
    <property type="gene ID" value="FBgn0207584"/>
</dbReference>
<dbReference type="EnsemblMetazoa" id="XM_002049948.3">
    <property type="protein sequence ID" value="XP_002049984.1"/>
    <property type="gene ID" value="LOC6625549"/>
</dbReference>
<dbReference type="GeneID" id="6625549"/>
<dbReference type="KEGG" id="dvi:6625549"/>
<dbReference type="CTD" id="204"/>
<dbReference type="eggNOG" id="KOG3078">
    <property type="taxonomic scope" value="Eukaryota"/>
</dbReference>
<dbReference type="HOGENOM" id="CLU_032354_1_0_1"/>
<dbReference type="InParanoid" id="B4LP08"/>
<dbReference type="OMA" id="HYKVDAA"/>
<dbReference type="OrthoDB" id="439792at2759"/>
<dbReference type="PhylomeDB" id="B4LP08"/>
<dbReference type="Proteomes" id="UP000008792">
    <property type="component" value="Unassembled WGS sequence"/>
</dbReference>
<dbReference type="GO" id="GO:0005829">
    <property type="term" value="C:cytosol"/>
    <property type="evidence" value="ECO:0007669"/>
    <property type="project" value="UniProtKB-SubCell"/>
</dbReference>
<dbReference type="GO" id="GO:0005758">
    <property type="term" value="C:mitochondrial intermembrane space"/>
    <property type="evidence" value="ECO:0007669"/>
    <property type="project" value="UniProtKB-SubCell"/>
</dbReference>
<dbReference type="GO" id="GO:0004017">
    <property type="term" value="F:adenylate kinase activity"/>
    <property type="evidence" value="ECO:0007669"/>
    <property type="project" value="UniProtKB-UniRule"/>
</dbReference>
<dbReference type="GO" id="GO:0005524">
    <property type="term" value="F:ATP binding"/>
    <property type="evidence" value="ECO:0007669"/>
    <property type="project" value="UniProtKB-KW"/>
</dbReference>
<dbReference type="GO" id="GO:0006172">
    <property type="term" value="P:ADP biosynthetic process"/>
    <property type="evidence" value="ECO:0007669"/>
    <property type="project" value="UniProtKB-UniRule"/>
</dbReference>
<dbReference type="GO" id="GO:0046033">
    <property type="term" value="P:AMP metabolic process"/>
    <property type="evidence" value="ECO:0007669"/>
    <property type="project" value="UniProtKB-UniRule"/>
</dbReference>
<dbReference type="GO" id="GO:0046034">
    <property type="term" value="P:ATP metabolic process"/>
    <property type="evidence" value="ECO:0007669"/>
    <property type="project" value="UniProtKB-UniRule"/>
</dbReference>
<dbReference type="CDD" id="cd01428">
    <property type="entry name" value="ADK"/>
    <property type="match status" value="1"/>
</dbReference>
<dbReference type="FunFam" id="3.40.50.300:FF:000106">
    <property type="entry name" value="Adenylate kinase mitochondrial"/>
    <property type="match status" value="1"/>
</dbReference>
<dbReference type="Gene3D" id="3.40.50.300">
    <property type="entry name" value="P-loop containing nucleotide triphosphate hydrolases"/>
    <property type="match status" value="1"/>
</dbReference>
<dbReference type="HAMAP" id="MF_00235">
    <property type="entry name" value="Adenylate_kinase_Adk"/>
    <property type="match status" value="1"/>
</dbReference>
<dbReference type="HAMAP" id="MF_03168">
    <property type="entry name" value="Adenylate_kinase_AK2"/>
    <property type="match status" value="1"/>
</dbReference>
<dbReference type="InterPro" id="IPR006259">
    <property type="entry name" value="Adenyl_kin_sub"/>
</dbReference>
<dbReference type="InterPro" id="IPR000850">
    <property type="entry name" value="Adenylat/UMP-CMP_kin"/>
</dbReference>
<dbReference type="InterPro" id="IPR033690">
    <property type="entry name" value="Adenylat_kinase_CS"/>
</dbReference>
<dbReference type="InterPro" id="IPR007862">
    <property type="entry name" value="Adenylate_kinase_lid-dom"/>
</dbReference>
<dbReference type="InterPro" id="IPR028587">
    <property type="entry name" value="AK2"/>
</dbReference>
<dbReference type="InterPro" id="IPR027417">
    <property type="entry name" value="P-loop_NTPase"/>
</dbReference>
<dbReference type="NCBIfam" id="TIGR01351">
    <property type="entry name" value="adk"/>
    <property type="match status" value="1"/>
</dbReference>
<dbReference type="NCBIfam" id="NF001380">
    <property type="entry name" value="PRK00279.1-2"/>
    <property type="match status" value="1"/>
</dbReference>
<dbReference type="NCBIfam" id="NF001381">
    <property type="entry name" value="PRK00279.1-3"/>
    <property type="match status" value="1"/>
</dbReference>
<dbReference type="NCBIfam" id="NF011100">
    <property type="entry name" value="PRK14527.1"/>
    <property type="match status" value="1"/>
</dbReference>
<dbReference type="PANTHER" id="PTHR23359">
    <property type="entry name" value="NUCLEOTIDE KINASE"/>
    <property type="match status" value="1"/>
</dbReference>
<dbReference type="Pfam" id="PF00406">
    <property type="entry name" value="ADK"/>
    <property type="match status" value="1"/>
</dbReference>
<dbReference type="Pfam" id="PF05191">
    <property type="entry name" value="ADK_lid"/>
    <property type="match status" value="1"/>
</dbReference>
<dbReference type="PRINTS" id="PR00094">
    <property type="entry name" value="ADENYLTKNASE"/>
</dbReference>
<dbReference type="SUPFAM" id="SSF52540">
    <property type="entry name" value="P-loop containing nucleoside triphosphate hydrolases"/>
    <property type="match status" value="1"/>
</dbReference>
<dbReference type="PROSITE" id="PS00113">
    <property type="entry name" value="ADENYLATE_KINASE"/>
    <property type="match status" value="1"/>
</dbReference>
<protein>
    <recommendedName>
        <fullName evidence="2">Adenylate kinase</fullName>
        <ecNumber evidence="2">2.7.4.3</ecNumber>
    </recommendedName>
    <alternativeName>
        <fullName evidence="2">ATP-AMP transphosphorylase</fullName>
    </alternativeName>
    <alternativeName>
        <fullName evidence="2">ATP:AMP phosphotransferase</fullName>
    </alternativeName>
    <alternativeName>
        <fullName evidence="2">Adenylate kinase cytosolic and mitochondrial</fullName>
    </alternativeName>
    <alternativeName>
        <fullName evidence="2">Adenylate monophosphate kinase</fullName>
    </alternativeName>
</protein>
<organism>
    <name type="scientific">Drosophila virilis</name>
    <name type="common">Fruit fly</name>
    <dbReference type="NCBI Taxonomy" id="7244"/>
    <lineage>
        <taxon>Eukaryota</taxon>
        <taxon>Metazoa</taxon>
        <taxon>Ecdysozoa</taxon>
        <taxon>Arthropoda</taxon>
        <taxon>Hexapoda</taxon>
        <taxon>Insecta</taxon>
        <taxon>Pterygota</taxon>
        <taxon>Neoptera</taxon>
        <taxon>Endopterygota</taxon>
        <taxon>Diptera</taxon>
        <taxon>Brachycera</taxon>
        <taxon>Muscomorpha</taxon>
        <taxon>Ephydroidea</taxon>
        <taxon>Drosophilidae</taxon>
        <taxon>Drosophila</taxon>
    </lineage>
</organism>
<reference key="1">
    <citation type="journal article" date="2007" name="Nature">
        <title>Evolution of genes and genomes on the Drosophila phylogeny.</title>
        <authorList>
            <consortium name="Drosophila 12 genomes consortium"/>
        </authorList>
    </citation>
    <scope>NUCLEOTIDE SEQUENCE [LARGE SCALE GENOMIC DNA]</scope>
    <source>
        <strain>Tucson 15010-1051.87</strain>
    </source>
</reference>
<comment type="function">
    <text evidence="2">Catalyzes the reversible transfer of the terminal phosphate group between ATP and AMP. Plays an important role in cellular energy homeostasis and in adenine nucleotide metabolism. Adenylate kinase activity is critical for regulation of the phosphate utilization and the AMP de novo biosynthesis pathways.</text>
</comment>
<comment type="catalytic activity">
    <reaction evidence="2">
        <text>AMP + ATP = 2 ADP</text>
        <dbReference type="Rhea" id="RHEA:12973"/>
        <dbReference type="ChEBI" id="CHEBI:30616"/>
        <dbReference type="ChEBI" id="CHEBI:456215"/>
        <dbReference type="ChEBI" id="CHEBI:456216"/>
        <dbReference type="EC" id="2.7.4.3"/>
    </reaction>
</comment>
<comment type="subunit">
    <text evidence="2">Monomer.</text>
</comment>
<comment type="subcellular location">
    <subcellularLocation>
        <location evidence="2">Cytoplasm</location>
        <location evidence="2">Cytosol</location>
    </subcellularLocation>
    <subcellularLocation>
        <location evidence="2">Mitochondrion intermembrane space</location>
    </subcellularLocation>
    <text evidence="2">Predominantly mitochondrial.</text>
</comment>
<comment type="domain">
    <text evidence="2">Consists of three domains, a large central CORE domain and two small peripheral domains, NMPbind and LID, which undergo movements during catalysis. The LID domain closes over the site of phosphoryl transfer upon ATP binding. Assembling and dissambling the active center during each catalytic cycle provides an effective means to prevent ATP hydrolysis.</text>
</comment>
<comment type="similarity">
    <text evidence="2">Belongs to the adenylate kinase family. AK2 subfamily.</text>
</comment>